<sequence>MSKDRRAPHVSSDHPVSGVAGRYATALFELADAEGALDAVAGDLERISAMLNESSDLVRLVRSPIFSAEDQTKAFGAVLEKAGISGLVKNFIGLVIRNRRLFGLSDMIGAYTTLLARKRGEMTADVVSAHPLQAAQVESLKAALKSATGRDVRINTKVDASLLGGLIVTVGSRMVDSSLRTKLNSLKIAMKEAS</sequence>
<keyword id="KW-0066">ATP synthesis</keyword>
<keyword id="KW-0997">Cell inner membrane</keyword>
<keyword id="KW-1003">Cell membrane</keyword>
<keyword id="KW-0139">CF(1)</keyword>
<keyword id="KW-0375">Hydrogen ion transport</keyword>
<keyword id="KW-0406">Ion transport</keyword>
<keyword id="KW-0472">Membrane</keyword>
<keyword id="KW-1185">Reference proteome</keyword>
<keyword id="KW-0813">Transport</keyword>
<name>ATPD_PARL1</name>
<gene>
    <name evidence="1" type="primary">atpH</name>
    <name type="ordered locus">Plav_1462</name>
</gene>
<evidence type="ECO:0000255" key="1">
    <source>
        <dbReference type="HAMAP-Rule" id="MF_01416"/>
    </source>
</evidence>
<accession>A7HT49</accession>
<reference key="1">
    <citation type="journal article" date="2011" name="Stand. Genomic Sci.">
        <title>Complete genome sequence of Parvibaculum lavamentivorans type strain (DS-1(T)).</title>
        <authorList>
            <person name="Schleheck D."/>
            <person name="Weiss M."/>
            <person name="Pitluck S."/>
            <person name="Bruce D."/>
            <person name="Land M.L."/>
            <person name="Han S."/>
            <person name="Saunders E."/>
            <person name="Tapia R."/>
            <person name="Detter C."/>
            <person name="Brettin T."/>
            <person name="Han J."/>
            <person name="Woyke T."/>
            <person name="Goodwin L."/>
            <person name="Pennacchio L."/>
            <person name="Nolan M."/>
            <person name="Cook A.M."/>
            <person name="Kjelleberg S."/>
            <person name="Thomas T."/>
        </authorList>
    </citation>
    <scope>NUCLEOTIDE SEQUENCE [LARGE SCALE GENOMIC DNA]</scope>
    <source>
        <strain>DS-1 / DSM 13023 / NCIMB 13966</strain>
    </source>
</reference>
<proteinExistence type="inferred from homology"/>
<organism>
    <name type="scientific">Parvibaculum lavamentivorans (strain DS-1 / DSM 13023 / NCIMB 13966)</name>
    <dbReference type="NCBI Taxonomy" id="402881"/>
    <lineage>
        <taxon>Bacteria</taxon>
        <taxon>Pseudomonadati</taxon>
        <taxon>Pseudomonadota</taxon>
        <taxon>Alphaproteobacteria</taxon>
        <taxon>Hyphomicrobiales</taxon>
        <taxon>Parvibaculaceae</taxon>
        <taxon>Parvibaculum</taxon>
    </lineage>
</organism>
<dbReference type="EMBL" id="CP000774">
    <property type="protein sequence ID" value="ABS63082.1"/>
    <property type="molecule type" value="Genomic_DNA"/>
</dbReference>
<dbReference type="RefSeq" id="WP_012110363.1">
    <property type="nucleotide sequence ID" value="NC_009719.1"/>
</dbReference>
<dbReference type="SMR" id="A7HT49"/>
<dbReference type="STRING" id="402881.Plav_1462"/>
<dbReference type="KEGG" id="pla:Plav_1462"/>
<dbReference type="eggNOG" id="COG0712">
    <property type="taxonomic scope" value="Bacteria"/>
</dbReference>
<dbReference type="HOGENOM" id="CLU_085114_0_1_5"/>
<dbReference type="OrthoDB" id="9796185at2"/>
<dbReference type="Proteomes" id="UP000006377">
    <property type="component" value="Chromosome"/>
</dbReference>
<dbReference type="GO" id="GO:0005886">
    <property type="term" value="C:plasma membrane"/>
    <property type="evidence" value="ECO:0007669"/>
    <property type="project" value="UniProtKB-SubCell"/>
</dbReference>
<dbReference type="GO" id="GO:0045259">
    <property type="term" value="C:proton-transporting ATP synthase complex"/>
    <property type="evidence" value="ECO:0007669"/>
    <property type="project" value="UniProtKB-KW"/>
</dbReference>
<dbReference type="GO" id="GO:0046933">
    <property type="term" value="F:proton-transporting ATP synthase activity, rotational mechanism"/>
    <property type="evidence" value="ECO:0007669"/>
    <property type="project" value="UniProtKB-UniRule"/>
</dbReference>
<dbReference type="Gene3D" id="1.10.520.20">
    <property type="entry name" value="N-terminal domain of the delta subunit of the F1F0-ATP synthase"/>
    <property type="match status" value="1"/>
</dbReference>
<dbReference type="HAMAP" id="MF_01416">
    <property type="entry name" value="ATP_synth_delta_bact"/>
    <property type="match status" value="1"/>
</dbReference>
<dbReference type="InterPro" id="IPR026015">
    <property type="entry name" value="ATP_synth_OSCP/delta_N_sf"/>
</dbReference>
<dbReference type="InterPro" id="IPR000711">
    <property type="entry name" value="ATPase_OSCP/dsu"/>
</dbReference>
<dbReference type="NCBIfam" id="TIGR01145">
    <property type="entry name" value="ATP_synt_delta"/>
    <property type="match status" value="1"/>
</dbReference>
<dbReference type="NCBIfam" id="NF004406">
    <property type="entry name" value="PRK05758.3-2"/>
    <property type="match status" value="1"/>
</dbReference>
<dbReference type="PANTHER" id="PTHR11910">
    <property type="entry name" value="ATP SYNTHASE DELTA CHAIN"/>
    <property type="match status" value="1"/>
</dbReference>
<dbReference type="Pfam" id="PF00213">
    <property type="entry name" value="OSCP"/>
    <property type="match status" value="1"/>
</dbReference>
<dbReference type="PRINTS" id="PR00125">
    <property type="entry name" value="ATPASEDELTA"/>
</dbReference>
<dbReference type="SUPFAM" id="SSF47928">
    <property type="entry name" value="N-terminal domain of the delta subunit of the F1F0-ATP synthase"/>
    <property type="match status" value="1"/>
</dbReference>
<comment type="function">
    <text evidence="1">F(1)F(0) ATP synthase produces ATP from ADP in the presence of a proton or sodium gradient. F-type ATPases consist of two structural domains, F(1) containing the extramembraneous catalytic core and F(0) containing the membrane proton channel, linked together by a central stalk and a peripheral stalk. During catalysis, ATP synthesis in the catalytic domain of F(1) is coupled via a rotary mechanism of the central stalk subunits to proton translocation.</text>
</comment>
<comment type="function">
    <text evidence="1">This protein is part of the stalk that links CF(0) to CF(1). It either transmits conformational changes from CF(0) to CF(1) or is implicated in proton conduction.</text>
</comment>
<comment type="subunit">
    <text evidence="1">F-type ATPases have 2 components, F(1) - the catalytic core - and F(0) - the membrane proton channel. F(1) has five subunits: alpha(3), beta(3), gamma(1), delta(1), epsilon(1). F(0) has three main subunits: a(1), b(2) and c(10-14). The alpha and beta chains form an alternating ring which encloses part of the gamma chain. F(1) is attached to F(0) by a central stalk formed by the gamma and epsilon chains, while a peripheral stalk is formed by the delta and b chains.</text>
</comment>
<comment type="subcellular location">
    <subcellularLocation>
        <location evidence="1">Cell inner membrane</location>
        <topology evidence="1">Peripheral membrane protein</topology>
    </subcellularLocation>
</comment>
<comment type="similarity">
    <text evidence="1">Belongs to the ATPase delta chain family.</text>
</comment>
<protein>
    <recommendedName>
        <fullName evidence="1">ATP synthase subunit delta</fullName>
    </recommendedName>
    <alternativeName>
        <fullName evidence="1">ATP synthase F(1) sector subunit delta</fullName>
    </alternativeName>
    <alternativeName>
        <fullName evidence="1">F-type ATPase subunit delta</fullName>
        <shortName evidence="1">F-ATPase subunit delta</shortName>
    </alternativeName>
</protein>
<feature type="chain" id="PRO_0000382136" description="ATP synthase subunit delta">
    <location>
        <begin position="1"/>
        <end position="194"/>
    </location>
</feature>